<name>MTNA_TRIV2</name>
<gene>
    <name evidence="1" type="primary">mtnA</name>
    <name type="ordered locus">Ava_3544</name>
</gene>
<sequence length="347" mass="37653">MIYPVIWQNNCVLLIDQTRLPNEYAVVEIHRSEEMARAIQTMIVRGAPAIGVAAAYGMYLGAREIETSERQEFLQKLEKVAQLLRATRPTAVNLFWAISRMLKTAYETLGTVAQIKENLLQTAQAINAEDLQTCQVIGDNGLAILPKTPTKLTLLTHCNAGALATAGYGTALGVVRSAWREGRLERLFADETRPRLQGAKLTTWECVQEGIPVTLITDNMAAHCMKQGLIDAVVVGADRIAANGDAANKIGTYSLAIVAKAHNVPFFVAAPVSTIDFELTDGSQIPIEERNPVEIYQVGDTTLTPPGVEFYNPAFDVTPAELITAIITENGAFAPCDLTKSSKQAVV</sequence>
<dbReference type="EC" id="5.3.1.23" evidence="1"/>
<dbReference type="EMBL" id="CP000117">
    <property type="protein sequence ID" value="ABA23151.1"/>
    <property type="molecule type" value="Genomic_DNA"/>
</dbReference>
<dbReference type="SMR" id="Q3M785"/>
<dbReference type="STRING" id="240292.Ava_3544"/>
<dbReference type="KEGG" id="ava:Ava_3544"/>
<dbReference type="eggNOG" id="COG0182">
    <property type="taxonomic scope" value="Bacteria"/>
</dbReference>
<dbReference type="HOGENOM" id="CLU_016218_1_2_3"/>
<dbReference type="UniPathway" id="UPA00904">
    <property type="reaction ID" value="UER00874"/>
</dbReference>
<dbReference type="Proteomes" id="UP000002533">
    <property type="component" value="Chromosome"/>
</dbReference>
<dbReference type="GO" id="GO:0046523">
    <property type="term" value="F:S-methyl-5-thioribose-1-phosphate isomerase activity"/>
    <property type="evidence" value="ECO:0007669"/>
    <property type="project" value="UniProtKB-UniRule"/>
</dbReference>
<dbReference type="GO" id="GO:0019509">
    <property type="term" value="P:L-methionine salvage from methylthioadenosine"/>
    <property type="evidence" value="ECO:0007669"/>
    <property type="project" value="UniProtKB-UniRule"/>
</dbReference>
<dbReference type="FunFam" id="3.40.50.10470:FF:000006">
    <property type="entry name" value="Methylthioribose-1-phosphate isomerase"/>
    <property type="match status" value="1"/>
</dbReference>
<dbReference type="FunFam" id="1.20.120.420:FF:000012">
    <property type="entry name" value="Putative methylthioribose-1-phosphate isomerase"/>
    <property type="match status" value="1"/>
</dbReference>
<dbReference type="Gene3D" id="1.20.120.420">
    <property type="entry name" value="translation initiation factor eif-2b, domain 1"/>
    <property type="match status" value="1"/>
</dbReference>
<dbReference type="Gene3D" id="3.40.50.10470">
    <property type="entry name" value="Translation initiation factor eif-2b, domain 2"/>
    <property type="match status" value="1"/>
</dbReference>
<dbReference type="HAMAP" id="MF_01678">
    <property type="entry name" value="Salvage_MtnA"/>
    <property type="match status" value="1"/>
</dbReference>
<dbReference type="InterPro" id="IPR000649">
    <property type="entry name" value="IF-2B-related"/>
</dbReference>
<dbReference type="InterPro" id="IPR005251">
    <property type="entry name" value="IF-M1Pi"/>
</dbReference>
<dbReference type="InterPro" id="IPR042529">
    <property type="entry name" value="IF_2B-like_C"/>
</dbReference>
<dbReference type="InterPro" id="IPR011559">
    <property type="entry name" value="Initiation_fac_2B_a/b/d"/>
</dbReference>
<dbReference type="InterPro" id="IPR027363">
    <property type="entry name" value="M1Pi_N"/>
</dbReference>
<dbReference type="InterPro" id="IPR037171">
    <property type="entry name" value="NagB/RpiA_transferase-like"/>
</dbReference>
<dbReference type="NCBIfam" id="TIGR00524">
    <property type="entry name" value="eIF-2B_rel"/>
    <property type="match status" value="1"/>
</dbReference>
<dbReference type="NCBIfam" id="NF004326">
    <property type="entry name" value="PRK05720.1"/>
    <property type="match status" value="1"/>
</dbReference>
<dbReference type="NCBIfam" id="TIGR00512">
    <property type="entry name" value="salvage_mtnA"/>
    <property type="match status" value="1"/>
</dbReference>
<dbReference type="PANTHER" id="PTHR43475">
    <property type="entry name" value="METHYLTHIORIBOSE-1-PHOSPHATE ISOMERASE"/>
    <property type="match status" value="1"/>
</dbReference>
<dbReference type="PANTHER" id="PTHR43475:SF1">
    <property type="entry name" value="METHYLTHIORIBOSE-1-PHOSPHATE ISOMERASE"/>
    <property type="match status" value="1"/>
</dbReference>
<dbReference type="Pfam" id="PF01008">
    <property type="entry name" value="IF-2B"/>
    <property type="match status" value="1"/>
</dbReference>
<dbReference type="SUPFAM" id="SSF100950">
    <property type="entry name" value="NagB/RpiA/CoA transferase-like"/>
    <property type="match status" value="1"/>
</dbReference>
<reference key="1">
    <citation type="journal article" date="2014" name="Stand. Genomic Sci.">
        <title>Complete genome sequence of Anabaena variabilis ATCC 29413.</title>
        <authorList>
            <person name="Thiel T."/>
            <person name="Pratte B.S."/>
            <person name="Zhong J."/>
            <person name="Goodwin L."/>
            <person name="Copeland A."/>
            <person name="Lucas S."/>
            <person name="Han C."/>
            <person name="Pitluck S."/>
            <person name="Land M.L."/>
            <person name="Kyrpides N.C."/>
            <person name="Woyke T."/>
        </authorList>
    </citation>
    <scope>NUCLEOTIDE SEQUENCE [LARGE SCALE GENOMIC DNA]</scope>
    <source>
        <strain>ATCC 29413 / PCC 7937</strain>
    </source>
</reference>
<organism>
    <name type="scientific">Trichormus variabilis (strain ATCC 29413 / PCC 7937)</name>
    <name type="common">Anabaena variabilis</name>
    <dbReference type="NCBI Taxonomy" id="240292"/>
    <lineage>
        <taxon>Bacteria</taxon>
        <taxon>Bacillati</taxon>
        <taxon>Cyanobacteriota</taxon>
        <taxon>Cyanophyceae</taxon>
        <taxon>Nostocales</taxon>
        <taxon>Nostocaceae</taxon>
        <taxon>Trichormus</taxon>
    </lineage>
</organism>
<proteinExistence type="inferred from homology"/>
<accession>Q3M785</accession>
<keyword id="KW-0028">Amino-acid biosynthesis</keyword>
<keyword id="KW-0413">Isomerase</keyword>
<keyword id="KW-0486">Methionine biosynthesis</keyword>
<protein>
    <recommendedName>
        <fullName evidence="1">Methylthioribose-1-phosphate isomerase</fullName>
        <shortName evidence="1">M1Pi</shortName>
        <shortName evidence="1">MTR-1-P isomerase</shortName>
        <ecNumber evidence="1">5.3.1.23</ecNumber>
    </recommendedName>
    <alternativeName>
        <fullName evidence="1">S-methyl-5-thioribose-1-phosphate isomerase</fullName>
    </alternativeName>
</protein>
<comment type="function">
    <text evidence="1">Catalyzes the interconversion of methylthioribose-1-phosphate (MTR-1-P) into methylthioribulose-1-phosphate (MTRu-1-P).</text>
</comment>
<comment type="catalytic activity">
    <reaction evidence="1">
        <text>5-(methylsulfanyl)-alpha-D-ribose 1-phosphate = 5-(methylsulfanyl)-D-ribulose 1-phosphate</text>
        <dbReference type="Rhea" id="RHEA:19989"/>
        <dbReference type="ChEBI" id="CHEBI:58533"/>
        <dbReference type="ChEBI" id="CHEBI:58548"/>
        <dbReference type="EC" id="5.3.1.23"/>
    </reaction>
</comment>
<comment type="pathway">
    <text evidence="1">Amino-acid biosynthesis; L-methionine biosynthesis via salvage pathway; L-methionine from S-methyl-5-thio-alpha-D-ribose 1-phosphate: step 1/6.</text>
</comment>
<comment type="similarity">
    <text evidence="2">Belongs to the eIF-2B alpha/beta/delta subunits family. MtnA subfamily.</text>
</comment>
<feature type="chain" id="PRO_0000357136" description="Methylthioribose-1-phosphate isomerase">
    <location>
        <begin position="1"/>
        <end position="347"/>
    </location>
</feature>
<feature type="active site" description="Proton donor" evidence="1">
    <location>
        <position position="238"/>
    </location>
</feature>
<feature type="binding site" evidence="1">
    <location>
        <begin position="45"/>
        <end position="47"/>
    </location>
    <ligand>
        <name>substrate</name>
    </ligand>
</feature>
<feature type="binding site" evidence="1">
    <location>
        <position position="88"/>
    </location>
    <ligand>
        <name>substrate</name>
    </ligand>
</feature>
<feature type="binding site" evidence="1">
    <location>
        <position position="197"/>
    </location>
    <ligand>
        <name>substrate</name>
    </ligand>
</feature>
<feature type="binding site" evidence="1">
    <location>
        <begin position="248"/>
        <end position="249"/>
    </location>
    <ligand>
        <name>substrate</name>
    </ligand>
</feature>
<feature type="site" description="Transition state stabilizer" evidence="1">
    <location>
        <position position="158"/>
    </location>
</feature>
<evidence type="ECO:0000255" key="1">
    <source>
        <dbReference type="HAMAP-Rule" id="MF_01678"/>
    </source>
</evidence>
<evidence type="ECO:0000305" key="2"/>